<evidence type="ECO:0000255" key="1">
    <source>
        <dbReference type="HAMAP-Rule" id="MF_00200"/>
    </source>
</evidence>
<feature type="chain" id="PRO_1000099348" description="RNA 3'-terminal phosphate cyclase">
    <location>
        <begin position="1"/>
        <end position="339"/>
    </location>
</feature>
<feature type="active site" description="Tele-AMP-histidine intermediate" evidence="1">
    <location>
        <position position="310"/>
    </location>
</feature>
<feature type="binding site" evidence="1">
    <location>
        <position position="109"/>
    </location>
    <ligand>
        <name>ATP</name>
        <dbReference type="ChEBI" id="CHEBI:30616"/>
    </ligand>
</feature>
<feature type="binding site" evidence="1">
    <location>
        <begin position="286"/>
        <end position="290"/>
    </location>
    <ligand>
        <name>ATP</name>
        <dbReference type="ChEBI" id="CHEBI:30616"/>
    </ligand>
</feature>
<accession>B0R414</accession>
<name>RTCA_HALS3</name>
<dbReference type="EC" id="6.5.1.4" evidence="1"/>
<dbReference type="EMBL" id="AM774415">
    <property type="protein sequence ID" value="CAP13479.1"/>
    <property type="molecule type" value="Genomic_DNA"/>
</dbReference>
<dbReference type="RefSeq" id="WP_012289214.1">
    <property type="nucleotide sequence ID" value="NC_010364.1"/>
</dbReference>
<dbReference type="SMR" id="B0R414"/>
<dbReference type="EnsemblBacteria" id="CAP13479">
    <property type="protein sequence ID" value="CAP13479"/>
    <property type="gene ID" value="OE_2081R"/>
</dbReference>
<dbReference type="GeneID" id="89349178"/>
<dbReference type="KEGG" id="hsl:OE_2081R"/>
<dbReference type="HOGENOM" id="CLU_027882_0_0_2"/>
<dbReference type="PhylomeDB" id="B0R414"/>
<dbReference type="Proteomes" id="UP000001321">
    <property type="component" value="Chromosome"/>
</dbReference>
<dbReference type="GO" id="GO:0005737">
    <property type="term" value="C:cytoplasm"/>
    <property type="evidence" value="ECO:0007669"/>
    <property type="project" value="UniProtKB-SubCell"/>
</dbReference>
<dbReference type="GO" id="GO:0005524">
    <property type="term" value="F:ATP binding"/>
    <property type="evidence" value="ECO:0007669"/>
    <property type="project" value="UniProtKB-KW"/>
</dbReference>
<dbReference type="GO" id="GO:0003963">
    <property type="term" value="F:RNA-3'-phosphate cyclase activity"/>
    <property type="evidence" value="ECO:0007669"/>
    <property type="project" value="UniProtKB-UniRule"/>
</dbReference>
<dbReference type="GO" id="GO:0006396">
    <property type="term" value="P:RNA processing"/>
    <property type="evidence" value="ECO:0007669"/>
    <property type="project" value="InterPro"/>
</dbReference>
<dbReference type="CDD" id="cd00874">
    <property type="entry name" value="RNA_Cyclase_Class_II"/>
    <property type="match status" value="1"/>
</dbReference>
<dbReference type="Gene3D" id="3.65.10.20">
    <property type="entry name" value="RNA 3'-terminal phosphate cyclase domain"/>
    <property type="match status" value="1"/>
</dbReference>
<dbReference type="Gene3D" id="3.30.360.20">
    <property type="entry name" value="RNA 3'-terminal phosphate cyclase, insert domain"/>
    <property type="match status" value="1"/>
</dbReference>
<dbReference type="HAMAP" id="MF_00200">
    <property type="entry name" value="RTC"/>
    <property type="match status" value="1"/>
</dbReference>
<dbReference type="InterPro" id="IPR013791">
    <property type="entry name" value="RNA3'-term_phos_cycl_insert"/>
</dbReference>
<dbReference type="InterPro" id="IPR023797">
    <property type="entry name" value="RNA3'_phos_cyclase_dom"/>
</dbReference>
<dbReference type="InterPro" id="IPR037136">
    <property type="entry name" value="RNA3'_phos_cyclase_dom_sf"/>
</dbReference>
<dbReference type="InterPro" id="IPR000228">
    <property type="entry name" value="RNA3'_term_phos_cyc"/>
</dbReference>
<dbReference type="InterPro" id="IPR017770">
    <property type="entry name" value="RNA3'_term_phos_cyc_type_1"/>
</dbReference>
<dbReference type="InterPro" id="IPR013792">
    <property type="entry name" value="RNA3'P_cycl/enolpyr_Trfase_a/b"/>
</dbReference>
<dbReference type="InterPro" id="IPR036553">
    <property type="entry name" value="RPTC_insert"/>
</dbReference>
<dbReference type="NCBIfam" id="NF003246">
    <property type="entry name" value="PRK04204.1-2"/>
    <property type="match status" value="1"/>
</dbReference>
<dbReference type="NCBIfam" id="TIGR03399">
    <property type="entry name" value="RNA_3prim_cycl"/>
    <property type="match status" value="1"/>
</dbReference>
<dbReference type="PANTHER" id="PTHR11096">
    <property type="entry name" value="RNA 3' TERMINAL PHOSPHATE CYCLASE"/>
    <property type="match status" value="1"/>
</dbReference>
<dbReference type="PANTHER" id="PTHR11096:SF0">
    <property type="entry name" value="RNA 3'-TERMINAL PHOSPHATE CYCLASE"/>
    <property type="match status" value="1"/>
</dbReference>
<dbReference type="Pfam" id="PF01137">
    <property type="entry name" value="RTC"/>
    <property type="match status" value="1"/>
</dbReference>
<dbReference type="Pfam" id="PF05189">
    <property type="entry name" value="RTC_insert"/>
    <property type="match status" value="1"/>
</dbReference>
<dbReference type="PIRSF" id="PIRSF005378">
    <property type="entry name" value="RNA3'_term_phos_cycl_euk"/>
    <property type="match status" value="1"/>
</dbReference>
<dbReference type="SUPFAM" id="SSF55205">
    <property type="entry name" value="EPT/RTPC-like"/>
    <property type="match status" value="1"/>
</dbReference>
<dbReference type="SUPFAM" id="SSF52913">
    <property type="entry name" value="RNA 3'-terminal phosphate cyclase, RPTC, insert domain"/>
    <property type="match status" value="1"/>
</dbReference>
<proteinExistence type="inferred from homology"/>
<organism>
    <name type="scientific">Halobacterium salinarum (strain ATCC 29341 / DSM 671 / R1)</name>
    <dbReference type="NCBI Taxonomy" id="478009"/>
    <lineage>
        <taxon>Archaea</taxon>
        <taxon>Methanobacteriati</taxon>
        <taxon>Methanobacteriota</taxon>
        <taxon>Stenosarchaea group</taxon>
        <taxon>Halobacteria</taxon>
        <taxon>Halobacteriales</taxon>
        <taxon>Halobacteriaceae</taxon>
        <taxon>Halobacterium</taxon>
        <taxon>Halobacterium salinarum NRC-34001</taxon>
    </lineage>
</organism>
<reference key="1">
    <citation type="journal article" date="2008" name="Genomics">
        <title>Evolution in the laboratory: the genome of Halobacterium salinarum strain R1 compared to that of strain NRC-1.</title>
        <authorList>
            <person name="Pfeiffer F."/>
            <person name="Schuster S.C."/>
            <person name="Broicher A."/>
            <person name="Falb M."/>
            <person name="Palm P."/>
            <person name="Rodewald K."/>
            <person name="Ruepp A."/>
            <person name="Soppa J."/>
            <person name="Tittor J."/>
            <person name="Oesterhelt D."/>
        </authorList>
    </citation>
    <scope>NUCLEOTIDE SEQUENCE [LARGE SCALE GENOMIC DNA]</scope>
    <source>
        <strain>ATCC 29341 / DSM 671 / R1</strain>
    </source>
</reference>
<keyword id="KW-0067">ATP-binding</keyword>
<keyword id="KW-0963">Cytoplasm</keyword>
<keyword id="KW-0436">Ligase</keyword>
<keyword id="KW-0547">Nucleotide-binding</keyword>
<gene>
    <name evidence="1" type="primary">rtcA</name>
    <name type="ordered locus">OE_2081R</name>
</gene>
<comment type="function">
    <text evidence="1">Catalyzes the conversion of 3'-phosphate to a 2',3'-cyclic phosphodiester at the end of RNA. The mechanism of action of the enzyme occurs in 3 steps: (A) adenylation of the enzyme by ATP; (B) transfer of adenylate to an RNA-N3'P to produce RNA-N3'PP5'A; (C) and attack of the adjacent 2'-hydroxyl on the 3'-phosphorus in the diester linkage to produce the cyclic end product. The biological role of this enzyme is unknown but it is likely to function in some aspects of cellular RNA processing.</text>
</comment>
<comment type="catalytic activity">
    <reaction evidence="1">
        <text>a 3'-end 3'-phospho-ribonucleotide-RNA + ATP = a 3'-end 2',3'-cyclophospho-ribonucleotide-RNA + AMP + diphosphate</text>
        <dbReference type="Rhea" id="RHEA:23976"/>
        <dbReference type="Rhea" id="RHEA-COMP:10463"/>
        <dbReference type="Rhea" id="RHEA-COMP:10464"/>
        <dbReference type="ChEBI" id="CHEBI:30616"/>
        <dbReference type="ChEBI" id="CHEBI:33019"/>
        <dbReference type="ChEBI" id="CHEBI:83062"/>
        <dbReference type="ChEBI" id="CHEBI:83064"/>
        <dbReference type="ChEBI" id="CHEBI:456215"/>
        <dbReference type="EC" id="6.5.1.4"/>
    </reaction>
</comment>
<comment type="subcellular location">
    <subcellularLocation>
        <location evidence="1">Cytoplasm</location>
    </subcellularLocation>
</comment>
<comment type="similarity">
    <text evidence="1">Belongs to the RNA 3'-terminal cyclase family. Type 1 subfamily.</text>
</comment>
<sequence>MHVLDGSSGGGQLVRTALTCAAVSGESFRMRYVRRARSNPGLQAQHCAAVNAVADICDAATDGVEVGSEAFSFEPEVAAEEADDDEEPTLGGTTSVEVGTAGSIPLVFDSLLPLAGALDEPITATLTGGTDAKWAPPMDYFQHVKLPLLREHGIDATVSVDRRGFYPRGGGEATLTVEPSTPTPITLTERGDREALTAYSVAESSLADDEVAEQQATAAAPDAAHEIAYTDADSAGSAVVLAAEYEHSRAGFAALGERGVSADAVGENAADALAAFESGPGAVDSHLADQLVPVVAVAGGEVRAPEVTTHIETCVDLLAEFDYDIDIEHTDDGAVVLSA</sequence>
<protein>
    <recommendedName>
        <fullName evidence="1">RNA 3'-terminal phosphate cyclase</fullName>
        <shortName evidence="1">RNA cyclase</shortName>
        <shortName evidence="1">RNA-3'-phosphate cyclase</shortName>
        <ecNumber evidence="1">6.5.1.4</ecNumber>
    </recommendedName>
</protein>